<proteinExistence type="inferred from homology"/>
<evidence type="ECO:0000255" key="1">
    <source>
        <dbReference type="HAMAP-Rule" id="MF_00019"/>
    </source>
</evidence>
<accession>Q21K90</accession>
<feature type="chain" id="PRO_0000329260" description="Phosphate acyltransferase">
    <location>
        <begin position="1"/>
        <end position="341"/>
    </location>
</feature>
<name>PLSX_SACD2</name>
<keyword id="KW-0963">Cytoplasm</keyword>
<keyword id="KW-0444">Lipid biosynthesis</keyword>
<keyword id="KW-0443">Lipid metabolism</keyword>
<keyword id="KW-0594">Phospholipid biosynthesis</keyword>
<keyword id="KW-1208">Phospholipid metabolism</keyword>
<keyword id="KW-1185">Reference proteome</keyword>
<keyword id="KW-0808">Transferase</keyword>
<reference key="1">
    <citation type="journal article" date="2008" name="PLoS Genet.">
        <title>Complete genome sequence of the complex carbohydrate-degrading marine bacterium, Saccharophagus degradans strain 2-40 T.</title>
        <authorList>
            <person name="Weiner R.M."/>
            <person name="Taylor L.E. II"/>
            <person name="Henrissat B."/>
            <person name="Hauser L."/>
            <person name="Land M."/>
            <person name="Coutinho P.M."/>
            <person name="Rancurel C."/>
            <person name="Saunders E.H."/>
            <person name="Longmire A.G."/>
            <person name="Zhang H."/>
            <person name="Bayer E.A."/>
            <person name="Gilbert H.J."/>
            <person name="Larimer F."/>
            <person name="Zhulin I.B."/>
            <person name="Ekborg N.A."/>
            <person name="Lamed R."/>
            <person name="Richardson P.M."/>
            <person name="Borovok I."/>
            <person name="Hutcheson S."/>
        </authorList>
    </citation>
    <scope>NUCLEOTIDE SEQUENCE [LARGE SCALE GENOMIC DNA]</scope>
    <source>
        <strain>2-40 / ATCC 43961 / DSM 17024</strain>
    </source>
</reference>
<organism>
    <name type="scientific">Saccharophagus degradans (strain 2-40 / ATCC 43961 / DSM 17024)</name>
    <dbReference type="NCBI Taxonomy" id="203122"/>
    <lineage>
        <taxon>Bacteria</taxon>
        <taxon>Pseudomonadati</taxon>
        <taxon>Pseudomonadota</taxon>
        <taxon>Gammaproteobacteria</taxon>
        <taxon>Cellvibrionales</taxon>
        <taxon>Cellvibrionaceae</taxon>
        <taxon>Saccharophagus</taxon>
    </lineage>
</organism>
<comment type="function">
    <text evidence="1">Catalyzes the reversible formation of acyl-phosphate (acyl-PO(4)) from acyl-[acyl-carrier-protein] (acyl-ACP). This enzyme utilizes acyl-ACP as fatty acyl donor, but not acyl-CoA.</text>
</comment>
<comment type="catalytic activity">
    <reaction evidence="1">
        <text>a fatty acyl-[ACP] + phosphate = an acyl phosphate + holo-[ACP]</text>
        <dbReference type="Rhea" id="RHEA:42292"/>
        <dbReference type="Rhea" id="RHEA-COMP:9685"/>
        <dbReference type="Rhea" id="RHEA-COMP:14125"/>
        <dbReference type="ChEBI" id="CHEBI:43474"/>
        <dbReference type="ChEBI" id="CHEBI:59918"/>
        <dbReference type="ChEBI" id="CHEBI:64479"/>
        <dbReference type="ChEBI" id="CHEBI:138651"/>
        <dbReference type="EC" id="2.3.1.274"/>
    </reaction>
</comment>
<comment type="pathway">
    <text evidence="1">Lipid metabolism; phospholipid metabolism.</text>
</comment>
<comment type="subunit">
    <text evidence="1">Homodimer. Probably interacts with PlsY.</text>
</comment>
<comment type="subcellular location">
    <subcellularLocation>
        <location evidence="1">Cytoplasm</location>
    </subcellularLocation>
    <text evidence="1">Associated with the membrane possibly through PlsY.</text>
</comment>
<comment type="similarity">
    <text evidence="1">Belongs to the PlsX family.</text>
</comment>
<sequence>MSEEIHLSVDAMGGDFGPRLCVEAAASFIAKHSNVRITLVGDKAAVSSCIPPQADLSRLHVLHADQVVDMADKPSHALRHKKNSSMWRALQLVADGEAQACVSGGNTGALMAIGCHLLKTIAGIDRPAIAKQIPTARGSSVLLDLGANLECSPQQLFQFGLMGQGLARVYGKSEPTVALLNVGSELTKGNDIIQDTAQLMGDCADMHFRGFVEGDSLYSGEVDVVVCDGFIGNVALKVSEGVAKFVFGDLRSRIGRGVRSRLLAWLAKPVLKPWAEQFRPAKYNGAALLGLKGVVIKSHGGADAEGFEQALYVALEQASAGIPLKIQASLAAMLGAGLETK</sequence>
<dbReference type="EC" id="2.3.1.274" evidence="1"/>
<dbReference type="EMBL" id="CP000282">
    <property type="protein sequence ID" value="ABD80889.1"/>
    <property type="molecule type" value="Genomic_DNA"/>
</dbReference>
<dbReference type="RefSeq" id="WP_011468109.1">
    <property type="nucleotide sequence ID" value="NC_007912.1"/>
</dbReference>
<dbReference type="SMR" id="Q21K90"/>
<dbReference type="STRING" id="203122.Sde_1627"/>
<dbReference type="GeneID" id="98613306"/>
<dbReference type="KEGG" id="sde:Sde_1627"/>
<dbReference type="eggNOG" id="COG0416">
    <property type="taxonomic scope" value="Bacteria"/>
</dbReference>
<dbReference type="HOGENOM" id="CLU_039379_1_0_6"/>
<dbReference type="OrthoDB" id="9806408at2"/>
<dbReference type="UniPathway" id="UPA00085"/>
<dbReference type="Proteomes" id="UP000001947">
    <property type="component" value="Chromosome"/>
</dbReference>
<dbReference type="GO" id="GO:0005737">
    <property type="term" value="C:cytoplasm"/>
    <property type="evidence" value="ECO:0007669"/>
    <property type="project" value="UniProtKB-SubCell"/>
</dbReference>
<dbReference type="GO" id="GO:0043811">
    <property type="term" value="F:phosphate:acyl-[acyl carrier protein] acyltransferase activity"/>
    <property type="evidence" value="ECO:0007669"/>
    <property type="project" value="UniProtKB-UniRule"/>
</dbReference>
<dbReference type="GO" id="GO:0006633">
    <property type="term" value="P:fatty acid biosynthetic process"/>
    <property type="evidence" value="ECO:0007669"/>
    <property type="project" value="UniProtKB-UniRule"/>
</dbReference>
<dbReference type="GO" id="GO:0008654">
    <property type="term" value="P:phospholipid biosynthetic process"/>
    <property type="evidence" value="ECO:0007669"/>
    <property type="project" value="UniProtKB-KW"/>
</dbReference>
<dbReference type="Gene3D" id="3.40.718.10">
    <property type="entry name" value="Isopropylmalate Dehydrogenase"/>
    <property type="match status" value="1"/>
</dbReference>
<dbReference type="HAMAP" id="MF_00019">
    <property type="entry name" value="PlsX"/>
    <property type="match status" value="1"/>
</dbReference>
<dbReference type="InterPro" id="IPR003664">
    <property type="entry name" value="FA_synthesis"/>
</dbReference>
<dbReference type="InterPro" id="IPR012281">
    <property type="entry name" value="Phospholipid_synth_PlsX-like"/>
</dbReference>
<dbReference type="NCBIfam" id="TIGR00182">
    <property type="entry name" value="plsX"/>
    <property type="match status" value="1"/>
</dbReference>
<dbReference type="PANTHER" id="PTHR30100">
    <property type="entry name" value="FATTY ACID/PHOSPHOLIPID SYNTHESIS PROTEIN PLSX"/>
    <property type="match status" value="1"/>
</dbReference>
<dbReference type="PANTHER" id="PTHR30100:SF1">
    <property type="entry name" value="PHOSPHATE ACYLTRANSFERASE"/>
    <property type="match status" value="1"/>
</dbReference>
<dbReference type="Pfam" id="PF02504">
    <property type="entry name" value="FA_synthesis"/>
    <property type="match status" value="1"/>
</dbReference>
<dbReference type="PIRSF" id="PIRSF002465">
    <property type="entry name" value="Phsphlp_syn_PlsX"/>
    <property type="match status" value="1"/>
</dbReference>
<dbReference type="SUPFAM" id="SSF53659">
    <property type="entry name" value="Isocitrate/Isopropylmalate dehydrogenase-like"/>
    <property type="match status" value="1"/>
</dbReference>
<protein>
    <recommendedName>
        <fullName evidence="1">Phosphate acyltransferase</fullName>
        <ecNumber evidence="1">2.3.1.274</ecNumber>
    </recommendedName>
    <alternativeName>
        <fullName evidence="1">Acyl-ACP phosphotransacylase</fullName>
    </alternativeName>
    <alternativeName>
        <fullName evidence="1">Acyl-[acyl-carrier-protein]--phosphate acyltransferase</fullName>
    </alternativeName>
    <alternativeName>
        <fullName evidence="1">Phosphate-acyl-ACP acyltransferase</fullName>
    </alternativeName>
</protein>
<gene>
    <name evidence="1" type="primary">plsX</name>
    <name type="ordered locus">Sde_1627</name>
</gene>